<accession>A4VKQ1</accession>
<organism>
    <name type="scientific">Stutzerimonas stutzeri (strain A1501)</name>
    <name type="common">Pseudomonas stutzeri</name>
    <dbReference type="NCBI Taxonomy" id="379731"/>
    <lineage>
        <taxon>Bacteria</taxon>
        <taxon>Pseudomonadati</taxon>
        <taxon>Pseudomonadota</taxon>
        <taxon>Gammaproteobacteria</taxon>
        <taxon>Pseudomonadales</taxon>
        <taxon>Pseudomonadaceae</taxon>
        <taxon>Stutzerimonas</taxon>
    </lineage>
</organism>
<dbReference type="EC" id="6.2.1.5" evidence="1"/>
<dbReference type="EMBL" id="CP000304">
    <property type="protein sequence ID" value="ABP79552.1"/>
    <property type="molecule type" value="Genomic_DNA"/>
</dbReference>
<dbReference type="RefSeq" id="WP_011913022.1">
    <property type="nucleotide sequence ID" value="NC_009434.1"/>
</dbReference>
<dbReference type="SMR" id="A4VKQ1"/>
<dbReference type="GeneID" id="66821647"/>
<dbReference type="KEGG" id="psa:PST_1878"/>
<dbReference type="eggNOG" id="COG0045">
    <property type="taxonomic scope" value="Bacteria"/>
</dbReference>
<dbReference type="HOGENOM" id="CLU_037430_0_2_6"/>
<dbReference type="UniPathway" id="UPA00223">
    <property type="reaction ID" value="UER00999"/>
</dbReference>
<dbReference type="Proteomes" id="UP000000233">
    <property type="component" value="Chromosome"/>
</dbReference>
<dbReference type="GO" id="GO:0005829">
    <property type="term" value="C:cytosol"/>
    <property type="evidence" value="ECO:0007669"/>
    <property type="project" value="TreeGrafter"/>
</dbReference>
<dbReference type="GO" id="GO:0042709">
    <property type="term" value="C:succinate-CoA ligase complex"/>
    <property type="evidence" value="ECO:0007669"/>
    <property type="project" value="TreeGrafter"/>
</dbReference>
<dbReference type="GO" id="GO:0005524">
    <property type="term" value="F:ATP binding"/>
    <property type="evidence" value="ECO:0007669"/>
    <property type="project" value="UniProtKB-UniRule"/>
</dbReference>
<dbReference type="GO" id="GO:0000287">
    <property type="term" value="F:magnesium ion binding"/>
    <property type="evidence" value="ECO:0007669"/>
    <property type="project" value="UniProtKB-UniRule"/>
</dbReference>
<dbReference type="GO" id="GO:0004775">
    <property type="term" value="F:succinate-CoA ligase (ADP-forming) activity"/>
    <property type="evidence" value="ECO:0007669"/>
    <property type="project" value="UniProtKB-UniRule"/>
</dbReference>
<dbReference type="GO" id="GO:0004776">
    <property type="term" value="F:succinate-CoA ligase (GDP-forming) activity"/>
    <property type="evidence" value="ECO:0007669"/>
    <property type="project" value="RHEA"/>
</dbReference>
<dbReference type="GO" id="GO:0006104">
    <property type="term" value="P:succinyl-CoA metabolic process"/>
    <property type="evidence" value="ECO:0007669"/>
    <property type="project" value="TreeGrafter"/>
</dbReference>
<dbReference type="GO" id="GO:0006099">
    <property type="term" value="P:tricarboxylic acid cycle"/>
    <property type="evidence" value="ECO:0007669"/>
    <property type="project" value="UniProtKB-UniRule"/>
</dbReference>
<dbReference type="FunFam" id="3.30.1490.20:FF:000002">
    <property type="entry name" value="Succinate--CoA ligase [ADP-forming] subunit beta"/>
    <property type="match status" value="1"/>
</dbReference>
<dbReference type="FunFam" id="3.30.470.20:FF:000002">
    <property type="entry name" value="Succinate--CoA ligase [ADP-forming] subunit beta"/>
    <property type="match status" value="1"/>
</dbReference>
<dbReference type="FunFam" id="3.40.50.261:FF:000001">
    <property type="entry name" value="Succinate--CoA ligase [ADP-forming] subunit beta"/>
    <property type="match status" value="1"/>
</dbReference>
<dbReference type="Gene3D" id="3.30.1490.20">
    <property type="entry name" value="ATP-grasp fold, A domain"/>
    <property type="match status" value="1"/>
</dbReference>
<dbReference type="Gene3D" id="3.30.470.20">
    <property type="entry name" value="ATP-grasp fold, B domain"/>
    <property type="match status" value="1"/>
</dbReference>
<dbReference type="Gene3D" id="3.40.50.261">
    <property type="entry name" value="Succinyl-CoA synthetase domains"/>
    <property type="match status" value="1"/>
</dbReference>
<dbReference type="HAMAP" id="MF_00558">
    <property type="entry name" value="Succ_CoA_beta"/>
    <property type="match status" value="1"/>
</dbReference>
<dbReference type="InterPro" id="IPR011761">
    <property type="entry name" value="ATP-grasp"/>
</dbReference>
<dbReference type="InterPro" id="IPR013650">
    <property type="entry name" value="ATP-grasp_succ-CoA_synth-type"/>
</dbReference>
<dbReference type="InterPro" id="IPR013815">
    <property type="entry name" value="ATP_grasp_subdomain_1"/>
</dbReference>
<dbReference type="InterPro" id="IPR017866">
    <property type="entry name" value="Succ-CoA_synthase_bsu_CS"/>
</dbReference>
<dbReference type="InterPro" id="IPR005811">
    <property type="entry name" value="SUCC_ACL_C"/>
</dbReference>
<dbReference type="InterPro" id="IPR005809">
    <property type="entry name" value="Succ_CoA_ligase-like_bsu"/>
</dbReference>
<dbReference type="InterPro" id="IPR016102">
    <property type="entry name" value="Succinyl-CoA_synth-like"/>
</dbReference>
<dbReference type="NCBIfam" id="NF001913">
    <property type="entry name" value="PRK00696.1"/>
    <property type="match status" value="1"/>
</dbReference>
<dbReference type="NCBIfam" id="TIGR01016">
    <property type="entry name" value="sucCoAbeta"/>
    <property type="match status" value="1"/>
</dbReference>
<dbReference type="PANTHER" id="PTHR11815:SF10">
    <property type="entry name" value="SUCCINATE--COA LIGASE [GDP-FORMING] SUBUNIT BETA, MITOCHONDRIAL"/>
    <property type="match status" value="1"/>
</dbReference>
<dbReference type="PANTHER" id="PTHR11815">
    <property type="entry name" value="SUCCINYL-COA SYNTHETASE BETA CHAIN"/>
    <property type="match status" value="1"/>
</dbReference>
<dbReference type="Pfam" id="PF08442">
    <property type="entry name" value="ATP-grasp_2"/>
    <property type="match status" value="1"/>
</dbReference>
<dbReference type="Pfam" id="PF00549">
    <property type="entry name" value="Ligase_CoA"/>
    <property type="match status" value="1"/>
</dbReference>
<dbReference type="PIRSF" id="PIRSF001554">
    <property type="entry name" value="SucCS_beta"/>
    <property type="match status" value="1"/>
</dbReference>
<dbReference type="SUPFAM" id="SSF56059">
    <property type="entry name" value="Glutathione synthetase ATP-binding domain-like"/>
    <property type="match status" value="1"/>
</dbReference>
<dbReference type="SUPFAM" id="SSF52210">
    <property type="entry name" value="Succinyl-CoA synthetase domains"/>
    <property type="match status" value="1"/>
</dbReference>
<dbReference type="PROSITE" id="PS50975">
    <property type="entry name" value="ATP_GRASP"/>
    <property type="match status" value="1"/>
</dbReference>
<dbReference type="PROSITE" id="PS01217">
    <property type="entry name" value="SUCCINYL_COA_LIG_3"/>
    <property type="match status" value="1"/>
</dbReference>
<keyword id="KW-0067">ATP-binding</keyword>
<keyword id="KW-0436">Ligase</keyword>
<keyword id="KW-0460">Magnesium</keyword>
<keyword id="KW-0479">Metal-binding</keyword>
<keyword id="KW-0547">Nucleotide-binding</keyword>
<keyword id="KW-1185">Reference proteome</keyword>
<keyword id="KW-0816">Tricarboxylic acid cycle</keyword>
<gene>
    <name evidence="1" type="primary">sucC</name>
    <name type="ordered locus">PST_1878</name>
</gene>
<protein>
    <recommendedName>
        <fullName evidence="1">Succinate--CoA ligase [ADP-forming] subunit beta</fullName>
        <ecNumber evidence="1">6.2.1.5</ecNumber>
    </recommendedName>
    <alternativeName>
        <fullName evidence="1">Succinyl-CoA synthetase subunit beta</fullName>
        <shortName evidence="1">SCS-beta</shortName>
    </alternativeName>
</protein>
<proteinExistence type="inferred from homology"/>
<feature type="chain" id="PRO_1000082175" description="Succinate--CoA ligase [ADP-forming] subunit beta">
    <location>
        <begin position="1"/>
        <end position="388"/>
    </location>
</feature>
<feature type="domain" description="ATP-grasp" evidence="1">
    <location>
        <begin position="9"/>
        <end position="244"/>
    </location>
</feature>
<feature type="binding site" evidence="1">
    <location>
        <position position="46"/>
    </location>
    <ligand>
        <name>ATP</name>
        <dbReference type="ChEBI" id="CHEBI:30616"/>
    </ligand>
</feature>
<feature type="binding site" evidence="1">
    <location>
        <begin position="53"/>
        <end position="55"/>
    </location>
    <ligand>
        <name>ATP</name>
        <dbReference type="ChEBI" id="CHEBI:30616"/>
    </ligand>
</feature>
<feature type="binding site" evidence="1">
    <location>
        <position position="99"/>
    </location>
    <ligand>
        <name>ATP</name>
        <dbReference type="ChEBI" id="CHEBI:30616"/>
    </ligand>
</feature>
<feature type="binding site" evidence="1">
    <location>
        <position position="102"/>
    </location>
    <ligand>
        <name>ATP</name>
        <dbReference type="ChEBI" id="CHEBI:30616"/>
    </ligand>
</feature>
<feature type="binding site" evidence="1">
    <location>
        <position position="107"/>
    </location>
    <ligand>
        <name>ATP</name>
        <dbReference type="ChEBI" id="CHEBI:30616"/>
    </ligand>
</feature>
<feature type="binding site" evidence="1">
    <location>
        <position position="199"/>
    </location>
    <ligand>
        <name>Mg(2+)</name>
        <dbReference type="ChEBI" id="CHEBI:18420"/>
    </ligand>
</feature>
<feature type="binding site" evidence="1">
    <location>
        <position position="213"/>
    </location>
    <ligand>
        <name>Mg(2+)</name>
        <dbReference type="ChEBI" id="CHEBI:18420"/>
    </ligand>
</feature>
<feature type="binding site" evidence="1">
    <location>
        <position position="264"/>
    </location>
    <ligand>
        <name>substrate</name>
        <note>ligand shared with subunit alpha</note>
    </ligand>
</feature>
<feature type="binding site" evidence="1">
    <location>
        <begin position="321"/>
        <end position="323"/>
    </location>
    <ligand>
        <name>substrate</name>
        <note>ligand shared with subunit alpha</note>
    </ligand>
</feature>
<name>SUCC_STUS1</name>
<sequence length="388" mass="41502">MNLHEYQGKQLFAEYGLPVSKGYAVDSPKEAAEACDKIGGTQWVVKAQVHAGGRGKAGGVKLVRSKDEARAFAQQWLDKRLVTYQTDANGQPVSKILVEACTDIDKELYLGAVVDRASRRIVFMASTEGGVDIEKVAHDTPEKILKATIDPLVGAQPFQARELAFQLGLKGDQVKQFVHIFVGLAQLFQDYDLALLEVNPLVIKTDGNLHCLDAKINIDSNAIYRQPKLRDMADPSQDDPREAHAAKWELNYVALDGNIGCMVNGAGLAMGTMDIVNLHGGAPANFLDVGGGATEERVTEAFKIILSDSNVAAVLVNIFGGIVRCDMIAEGIIGAVREVGVKVPVVVRLEGNNADLGAKMLSESGLNIIGANSLTDAAIQVVKAAEGK</sequence>
<reference key="1">
    <citation type="journal article" date="2008" name="Proc. Natl. Acad. Sci. U.S.A.">
        <title>Nitrogen fixation island and rhizosphere competence traits in the genome of root-associated Pseudomonas stutzeri A1501.</title>
        <authorList>
            <person name="Yan Y."/>
            <person name="Yang J."/>
            <person name="Dou Y."/>
            <person name="Chen M."/>
            <person name="Ping S."/>
            <person name="Peng J."/>
            <person name="Lu W."/>
            <person name="Zhang W."/>
            <person name="Yao Z."/>
            <person name="Li H."/>
            <person name="Liu W."/>
            <person name="He S."/>
            <person name="Geng L."/>
            <person name="Zhang X."/>
            <person name="Yang F."/>
            <person name="Yu H."/>
            <person name="Zhan Y."/>
            <person name="Li D."/>
            <person name="Lin Z."/>
            <person name="Wang Y."/>
            <person name="Elmerich C."/>
            <person name="Lin M."/>
            <person name="Jin Q."/>
        </authorList>
    </citation>
    <scope>NUCLEOTIDE SEQUENCE [LARGE SCALE GENOMIC DNA]</scope>
    <source>
        <strain>A1501</strain>
    </source>
</reference>
<comment type="function">
    <text evidence="1">Succinyl-CoA synthetase functions in the citric acid cycle (TCA), coupling the hydrolysis of succinyl-CoA to the synthesis of either ATP or GTP and thus represents the only step of substrate-level phosphorylation in the TCA. The beta subunit provides nucleotide specificity of the enzyme and binds the substrate succinate, while the binding sites for coenzyme A and phosphate are found in the alpha subunit.</text>
</comment>
<comment type="catalytic activity">
    <reaction evidence="1">
        <text>succinate + ATP + CoA = succinyl-CoA + ADP + phosphate</text>
        <dbReference type="Rhea" id="RHEA:17661"/>
        <dbReference type="ChEBI" id="CHEBI:30031"/>
        <dbReference type="ChEBI" id="CHEBI:30616"/>
        <dbReference type="ChEBI" id="CHEBI:43474"/>
        <dbReference type="ChEBI" id="CHEBI:57287"/>
        <dbReference type="ChEBI" id="CHEBI:57292"/>
        <dbReference type="ChEBI" id="CHEBI:456216"/>
        <dbReference type="EC" id="6.2.1.5"/>
    </reaction>
    <physiologicalReaction direction="right-to-left" evidence="1">
        <dbReference type="Rhea" id="RHEA:17663"/>
    </physiologicalReaction>
</comment>
<comment type="catalytic activity">
    <reaction evidence="1">
        <text>GTP + succinate + CoA = succinyl-CoA + GDP + phosphate</text>
        <dbReference type="Rhea" id="RHEA:22120"/>
        <dbReference type="ChEBI" id="CHEBI:30031"/>
        <dbReference type="ChEBI" id="CHEBI:37565"/>
        <dbReference type="ChEBI" id="CHEBI:43474"/>
        <dbReference type="ChEBI" id="CHEBI:57287"/>
        <dbReference type="ChEBI" id="CHEBI:57292"/>
        <dbReference type="ChEBI" id="CHEBI:58189"/>
    </reaction>
    <physiologicalReaction direction="right-to-left" evidence="1">
        <dbReference type="Rhea" id="RHEA:22122"/>
    </physiologicalReaction>
</comment>
<comment type="cofactor">
    <cofactor evidence="1">
        <name>Mg(2+)</name>
        <dbReference type="ChEBI" id="CHEBI:18420"/>
    </cofactor>
    <text evidence="1">Binds 1 Mg(2+) ion per subunit.</text>
</comment>
<comment type="pathway">
    <text evidence="1">Carbohydrate metabolism; tricarboxylic acid cycle; succinate from succinyl-CoA (ligase route): step 1/1.</text>
</comment>
<comment type="subunit">
    <text evidence="1">Heterotetramer of two alpha and two beta subunits.</text>
</comment>
<comment type="similarity">
    <text evidence="1">Belongs to the succinate/malate CoA ligase beta subunit family.</text>
</comment>
<evidence type="ECO:0000255" key="1">
    <source>
        <dbReference type="HAMAP-Rule" id="MF_00558"/>
    </source>
</evidence>